<organism>
    <name type="scientific">Homo sapiens</name>
    <name type="common">Human</name>
    <dbReference type="NCBI Taxonomy" id="9606"/>
    <lineage>
        <taxon>Eukaryota</taxon>
        <taxon>Metazoa</taxon>
        <taxon>Chordata</taxon>
        <taxon>Craniata</taxon>
        <taxon>Vertebrata</taxon>
        <taxon>Euteleostomi</taxon>
        <taxon>Mammalia</taxon>
        <taxon>Eutheria</taxon>
        <taxon>Euarchontoglires</taxon>
        <taxon>Primates</taxon>
        <taxon>Haplorrhini</taxon>
        <taxon>Catarrhini</taxon>
        <taxon>Hominidae</taxon>
        <taxon>Homo</taxon>
    </lineage>
</organism>
<comment type="similarity">
    <text evidence="3">Belongs to the 'GDXG' lipolytic enzyme family.</text>
</comment>
<comment type="sequence caution" evidence="3">
    <conflict type="miscellaneous discrepancy">
        <sequence resource="EMBL-CDS" id="BAG54581"/>
    </conflict>
    <text>Aberrant splicing.</text>
</comment>
<evidence type="ECO:0000250" key="1">
    <source>
        <dbReference type="UniProtKB" id="Q5NUF3"/>
    </source>
</evidence>
<evidence type="ECO:0000250" key="2">
    <source>
        <dbReference type="UniProtKB" id="Q8BLF1"/>
    </source>
</evidence>
<evidence type="ECO:0000305" key="3"/>
<name>ADCL3_HUMAN</name>
<gene>
    <name type="primary">AADACL3</name>
</gene>
<proteinExistence type="evidence at transcript level"/>
<keyword id="KW-0378">Hydrolase</keyword>
<keyword id="KW-1185">Reference proteome</keyword>
<sequence length="407" mass="46155">MWDLALIFLAAACVFSLGVTLWVICSHFFTVHIPAAVGHPVKLRVLHCIFQLLLTWGMIFEKLRICSMPQFFCFMQDLPPLKYDPDVVVTDFRFGTIPVKLYQPKASTCTLKPGIVYYHGGGGVMGSLKTHHGICSRLCKESDSVVLAVGYRKLPKHKFPVPVRDCLVATIHFLKSLDAYGVDPARVVVCGDSFGGAIAAVVCQQLVDRPDLPRIRAQILIYAILQALDLQTPSFQQRKNIPLLTWSFICYFFFQNLDFSSSWQEVIMKGAHLPAEVWEKYRKWLGPENIPERFKERGYQLKPHEPMNEAAYLEVSVVLDVMCSPLIAEDDIVSQLPETCIVSCEYDALRDNSLLYKKRLEDLGVPVTWHHMEDGFHGVLRTIDMSFLHFPCSMRILSALVQFVKGL</sequence>
<dbReference type="EC" id="3.1.1.-"/>
<dbReference type="EMBL" id="AK127828">
    <property type="protein sequence ID" value="BAG54581.1"/>
    <property type="status" value="ALT_SEQ"/>
    <property type="molecule type" value="mRNA"/>
</dbReference>
<dbReference type="EMBL" id="AC244670">
    <property type="status" value="NOT_ANNOTATED_CDS"/>
    <property type="molecule type" value="Genomic_DNA"/>
</dbReference>
<dbReference type="CCDS" id="CCDS41253.2"/>
<dbReference type="RefSeq" id="NP_001096640.2">
    <property type="nucleotide sequence ID" value="NM_001103170.3"/>
</dbReference>
<dbReference type="SMR" id="Q5VUY0"/>
<dbReference type="BioGRID" id="126013">
    <property type="interactions" value="1"/>
</dbReference>
<dbReference type="STRING" id="9606.ENSP00000352268"/>
<dbReference type="ESTHER" id="human-AADACL3">
    <property type="family name" value="Arylacetamide_deacetylase"/>
</dbReference>
<dbReference type="iPTMnet" id="Q5VUY0"/>
<dbReference type="PhosphoSitePlus" id="Q5VUY0"/>
<dbReference type="BioMuta" id="AADACL3"/>
<dbReference type="DMDM" id="317373552"/>
<dbReference type="PaxDb" id="9606-ENSP00000352268"/>
<dbReference type="Antibodypedia" id="57582">
    <property type="antibodies" value="41 antibodies from 10 providers"/>
</dbReference>
<dbReference type="DNASU" id="126767"/>
<dbReference type="Ensembl" id="ENST00000359318.8">
    <property type="protein sequence ID" value="ENSP00000352268.6"/>
    <property type="gene ID" value="ENSG00000188984.12"/>
</dbReference>
<dbReference type="GeneID" id="126767"/>
<dbReference type="KEGG" id="hsa:126767"/>
<dbReference type="MANE-Select" id="ENST00000359318.8">
    <property type="protein sequence ID" value="ENSP00000352268.6"/>
    <property type="RefSeq nucleotide sequence ID" value="NM_001103170.3"/>
    <property type="RefSeq protein sequence ID" value="NP_001096640.2"/>
</dbReference>
<dbReference type="UCSC" id="uc057ckc.1">
    <property type="organism name" value="human"/>
</dbReference>
<dbReference type="AGR" id="HGNC:32037"/>
<dbReference type="CTD" id="126767"/>
<dbReference type="DisGeNET" id="126767"/>
<dbReference type="GeneCards" id="AADACL3"/>
<dbReference type="HGNC" id="HGNC:32037">
    <property type="gene designation" value="AADACL3"/>
</dbReference>
<dbReference type="HPA" id="ENSG00000188984">
    <property type="expression patterns" value="Tissue enhanced (placenta, skin)"/>
</dbReference>
<dbReference type="neXtProt" id="NX_Q5VUY0"/>
<dbReference type="OpenTargets" id="ENSG00000188984"/>
<dbReference type="PharmGKB" id="PA145147526"/>
<dbReference type="VEuPathDB" id="HostDB:ENSG00000188984"/>
<dbReference type="eggNOG" id="KOG1515">
    <property type="taxonomic scope" value="Eukaryota"/>
</dbReference>
<dbReference type="GeneTree" id="ENSGT00940000162160"/>
<dbReference type="HOGENOM" id="CLU_012494_12_2_1"/>
<dbReference type="InParanoid" id="Q5VUY0"/>
<dbReference type="OMA" id="TLWVICS"/>
<dbReference type="OrthoDB" id="408631at2759"/>
<dbReference type="PAN-GO" id="Q5VUY0">
    <property type="GO annotations" value="0 GO annotations based on evolutionary models"/>
</dbReference>
<dbReference type="PhylomeDB" id="Q5VUY0"/>
<dbReference type="TreeFam" id="TF314978"/>
<dbReference type="PathwayCommons" id="Q5VUY0"/>
<dbReference type="SABIO-RK" id="Q5VUY0"/>
<dbReference type="BioGRID-ORCS" id="126767">
    <property type="hits" value="13 hits in 1141 CRISPR screens"/>
</dbReference>
<dbReference type="GeneWiki" id="AADACL3_(gene)"/>
<dbReference type="GenomeRNAi" id="126767"/>
<dbReference type="Pharos" id="Q5VUY0">
    <property type="development level" value="Tdark"/>
</dbReference>
<dbReference type="PRO" id="PR:Q5VUY0"/>
<dbReference type="Proteomes" id="UP000005640">
    <property type="component" value="Chromosome 1"/>
</dbReference>
<dbReference type="RNAct" id="Q5VUY0">
    <property type="molecule type" value="protein"/>
</dbReference>
<dbReference type="Bgee" id="ENSG00000188984">
    <property type="expression patterns" value="Expressed in placenta and 8 other cell types or tissues"/>
</dbReference>
<dbReference type="GO" id="GO:0016020">
    <property type="term" value="C:membrane"/>
    <property type="evidence" value="ECO:0007669"/>
    <property type="project" value="InterPro"/>
</dbReference>
<dbReference type="GO" id="GO:0052689">
    <property type="term" value="F:carboxylic ester hydrolase activity"/>
    <property type="evidence" value="ECO:0007669"/>
    <property type="project" value="InterPro"/>
</dbReference>
<dbReference type="Gene3D" id="3.40.50.1820">
    <property type="entry name" value="alpha/beta hydrolase"/>
    <property type="match status" value="1"/>
</dbReference>
<dbReference type="InterPro" id="IPR013094">
    <property type="entry name" value="AB_hydrolase_3"/>
</dbReference>
<dbReference type="InterPro" id="IPR029058">
    <property type="entry name" value="AB_hydrolase_fold"/>
</dbReference>
<dbReference type="InterPro" id="IPR017157">
    <property type="entry name" value="Arylacetamide_deacetylase"/>
</dbReference>
<dbReference type="InterPro" id="IPR050300">
    <property type="entry name" value="GDXG_lipolytic_enzyme"/>
</dbReference>
<dbReference type="PANTHER" id="PTHR48081">
    <property type="entry name" value="AB HYDROLASE SUPERFAMILY PROTEIN C4A8.06C"/>
    <property type="match status" value="1"/>
</dbReference>
<dbReference type="PANTHER" id="PTHR48081:SF32">
    <property type="entry name" value="ALPHA_BETA HYDROLASE FOLD-3 DOMAIN-CONTAINING PROTEIN"/>
    <property type="match status" value="1"/>
</dbReference>
<dbReference type="Pfam" id="PF07859">
    <property type="entry name" value="Abhydrolase_3"/>
    <property type="match status" value="2"/>
</dbReference>
<dbReference type="PIRSF" id="PIRSF037251">
    <property type="entry name" value="Arylacetamide_deacetylase"/>
    <property type="match status" value="1"/>
</dbReference>
<dbReference type="SUPFAM" id="SSF53474">
    <property type="entry name" value="alpha/beta-Hydrolases"/>
    <property type="match status" value="1"/>
</dbReference>
<accession>Q5VUY0</accession>
<accession>B3KXR9</accession>
<accession>Q5VUY1</accession>
<reference key="1">
    <citation type="journal article" date="2004" name="Nat. Genet.">
        <title>Complete sequencing and characterization of 21,243 full-length human cDNAs.</title>
        <authorList>
            <person name="Ota T."/>
            <person name="Suzuki Y."/>
            <person name="Nishikawa T."/>
            <person name="Otsuki T."/>
            <person name="Sugiyama T."/>
            <person name="Irie R."/>
            <person name="Wakamatsu A."/>
            <person name="Hayashi K."/>
            <person name="Sato H."/>
            <person name="Nagai K."/>
            <person name="Kimura K."/>
            <person name="Makita H."/>
            <person name="Sekine M."/>
            <person name="Obayashi M."/>
            <person name="Nishi T."/>
            <person name="Shibahara T."/>
            <person name="Tanaka T."/>
            <person name="Ishii S."/>
            <person name="Yamamoto J."/>
            <person name="Saito K."/>
            <person name="Kawai Y."/>
            <person name="Isono Y."/>
            <person name="Nakamura Y."/>
            <person name="Nagahari K."/>
            <person name="Murakami K."/>
            <person name="Yasuda T."/>
            <person name="Iwayanagi T."/>
            <person name="Wagatsuma M."/>
            <person name="Shiratori A."/>
            <person name="Sudo H."/>
            <person name="Hosoiri T."/>
            <person name="Kaku Y."/>
            <person name="Kodaira H."/>
            <person name="Kondo H."/>
            <person name="Sugawara M."/>
            <person name="Takahashi M."/>
            <person name="Kanda K."/>
            <person name="Yokoi T."/>
            <person name="Furuya T."/>
            <person name="Kikkawa E."/>
            <person name="Omura Y."/>
            <person name="Abe K."/>
            <person name="Kamihara K."/>
            <person name="Katsuta N."/>
            <person name="Sato K."/>
            <person name="Tanikawa M."/>
            <person name="Yamazaki M."/>
            <person name="Ninomiya K."/>
            <person name="Ishibashi T."/>
            <person name="Yamashita H."/>
            <person name="Murakawa K."/>
            <person name="Fujimori K."/>
            <person name="Tanai H."/>
            <person name="Kimata M."/>
            <person name="Watanabe M."/>
            <person name="Hiraoka S."/>
            <person name="Chiba Y."/>
            <person name="Ishida S."/>
            <person name="Ono Y."/>
            <person name="Takiguchi S."/>
            <person name="Watanabe S."/>
            <person name="Yosida M."/>
            <person name="Hotuta T."/>
            <person name="Kusano J."/>
            <person name="Kanehori K."/>
            <person name="Takahashi-Fujii A."/>
            <person name="Hara H."/>
            <person name="Tanase T.-O."/>
            <person name="Nomura Y."/>
            <person name="Togiya S."/>
            <person name="Komai F."/>
            <person name="Hara R."/>
            <person name="Takeuchi K."/>
            <person name="Arita M."/>
            <person name="Imose N."/>
            <person name="Musashino K."/>
            <person name="Yuuki H."/>
            <person name="Oshima A."/>
            <person name="Sasaki N."/>
            <person name="Aotsuka S."/>
            <person name="Yoshikawa Y."/>
            <person name="Matsunawa H."/>
            <person name="Ichihara T."/>
            <person name="Shiohata N."/>
            <person name="Sano S."/>
            <person name="Moriya S."/>
            <person name="Momiyama H."/>
            <person name="Satoh N."/>
            <person name="Takami S."/>
            <person name="Terashima Y."/>
            <person name="Suzuki O."/>
            <person name="Nakagawa S."/>
            <person name="Senoh A."/>
            <person name="Mizoguchi H."/>
            <person name="Goto Y."/>
            <person name="Shimizu F."/>
            <person name="Wakebe H."/>
            <person name="Hishigaki H."/>
            <person name="Watanabe T."/>
            <person name="Sugiyama A."/>
            <person name="Takemoto M."/>
            <person name="Kawakami B."/>
            <person name="Yamazaki M."/>
            <person name="Watanabe K."/>
            <person name="Kumagai A."/>
            <person name="Itakura S."/>
            <person name="Fukuzumi Y."/>
            <person name="Fujimori Y."/>
            <person name="Komiyama M."/>
            <person name="Tashiro H."/>
            <person name="Tanigami A."/>
            <person name="Fujiwara T."/>
            <person name="Ono T."/>
            <person name="Yamada K."/>
            <person name="Fujii Y."/>
            <person name="Ozaki K."/>
            <person name="Hirao M."/>
            <person name="Ohmori Y."/>
            <person name="Kawabata A."/>
            <person name="Hikiji T."/>
            <person name="Kobatake N."/>
            <person name="Inagaki H."/>
            <person name="Ikema Y."/>
            <person name="Okamoto S."/>
            <person name="Okitani R."/>
            <person name="Kawakami T."/>
            <person name="Noguchi S."/>
            <person name="Itoh T."/>
            <person name="Shigeta K."/>
            <person name="Senba T."/>
            <person name="Matsumura K."/>
            <person name="Nakajima Y."/>
            <person name="Mizuno T."/>
            <person name="Morinaga M."/>
            <person name="Sasaki M."/>
            <person name="Togashi T."/>
            <person name="Oyama M."/>
            <person name="Hata H."/>
            <person name="Watanabe M."/>
            <person name="Komatsu T."/>
            <person name="Mizushima-Sugano J."/>
            <person name="Satoh T."/>
            <person name="Shirai Y."/>
            <person name="Takahashi Y."/>
            <person name="Nakagawa K."/>
            <person name="Okumura K."/>
            <person name="Nagase T."/>
            <person name="Nomura N."/>
            <person name="Kikuchi H."/>
            <person name="Masuho Y."/>
            <person name="Yamashita R."/>
            <person name="Nakai K."/>
            <person name="Yada T."/>
            <person name="Nakamura Y."/>
            <person name="Ohara O."/>
            <person name="Isogai T."/>
            <person name="Sugano S."/>
        </authorList>
    </citation>
    <scope>NUCLEOTIDE SEQUENCE [LARGE SCALE MRNA]</scope>
    <source>
        <tissue>Placenta</tissue>
    </source>
</reference>
<reference key="2">
    <citation type="journal article" date="2006" name="Nature">
        <title>The DNA sequence and biological annotation of human chromosome 1.</title>
        <authorList>
            <person name="Gregory S.G."/>
            <person name="Barlow K.F."/>
            <person name="McLay K.E."/>
            <person name="Kaul R."/>
            <person name="Swarbreck D."/>
            <person name="Dunham A."/>
            <person name="Scott C.E."/>
            <person name="Howe K.L."/>
            <person name="Woodfine K."/>
            <person name="Spencer C.C.A."/>
            <person name="Jones M.C."/>
            <person name="Gillson C."/>
            <person name="Searle S."/>
            <person name="Zhou Y."/>
            <person name="Kokocinski F."/>
            <person name="McDonald L."/>
            <person name="Evans R."/>
            <person name="Phillips K."/>
            <person name="Atkinson A."/>
            <person name="Cooper R."/>
            <person name="Jones C."/>
            <person name="Hall R.E."/>
            <person name="Andrews T.D."/>
            <person name="Lloyd C."/>
            <person name="Ainscough R."/>
            <person name="Almeida J.P."/>
            <person name="Ambrose K.D."/>
            <person name="Anderson F."/>
            <person name="Andrew R.W."/>
            <person name="Ashwell R.I.S."/>
            <person name="Aubin K."/>
            <person name="Babbage A.K."/>
            <person name="Bagguley C.L."/>
            <person name="Bailey J."/>
            <person name="Beasley H."/>
            <person name="Bethel G."/>
            <person name="Bird C.P."/>
            <person name="Bray-Allen S."/>
            <person name="Brown J.Y."/>
            <person name="Brown A.J."/>
            <person name="Buckley D."/>
            <person name="Burton J."/>
            <person name="Bye J."/>
            <person name="Carder C."/>
            <person name="Chapman J.C."/>
            <person name="Clark S.Y."/>
            <person name="Clarke G."/>
            <person name="Clee C."/>
            <person name="Cobley V."/>
            <person name="Collier R.E."/>
            <person name="Corby N."/>
            <person name="Coville G.J."/>
            <person name="Davies J."/>
            <person name="Deadman R."/>
            <person name="Dunn M."/>
            <person name="Earthrowl M."/>
            <person name="Ellington A.G."/>
            <person name="Errington H."/>
            <person name="Frankish A."/>
            <person name="Frankland J."/>
            <person name="French L."/>
            <person name="Garner P."/>
            <person name="Garnett J."/>
            <person name="Gay L."/>
            <person name="Ghori M.R.J."/>
            <person name="Gibson R."/>
            <person name="Gilby L.M."/>
            <person name="Gillett W."/>
            <person name="Glithero R.J."/>
            <person name="Grafham D.V."/>
            <person name="Griffiths C."/>
            <person name="Griffiths-Jones S."/>
            <person name="Grocock R."/>
            <person name="Hammond S."/>
            <person name="Harrison E.S.I."/>
            <person name="Hart E."/>
            <person name="Haugen E."/>
            <person name="Heath P.D."/>
            <person name="Holmes S."/>
            <person name="Holt K."/>
            <person name="Howden P.J."/>
            <person name="Hunt A.R."/>
            <person name="Hunt S.E."/>
            <person name="Hunter G."/>
            <person name="Isherwood J."/>
            <person name="James R."/>
            <person name="Johnson C."/>
            <person name="Johnson D."/>
            <person name="Joy A."/>
            <person name="Kay M."/>
            <person name="Kershaw J.K."/>
            <person name="Kibukawa M."/>
            <person name="Kimberley A.M."/>
            <person name="King A."/>
            <person name="Knights A.J."/>
            <person name="Lad H."/>
            <person name="Laird G."/>
            <person name="Lawlor S."/>
            <person name="Leongamornlert D.A."/>
            <person name="Lloyd D.M."/>
            <person name="Loveland J."/>
            <person name="Lovell J."/>
            <person name="Lush M.J."/>
            <person name="Lyne R."/>
            <person name="Martin S."/>
            <person name="Mashreghi-Mohammadi M."/>
            <person name="Matthews L."/>
            <person name="Matthews N.S.W."/>
            <person name="McLaren S."/>
            <person name="Milne S."/>
            <person name="Mistry S."/>
            <person name="Moore M.J.F."/>
            <person name="Nickerson T."/>
            <person name="O'Dell C.N."/>
            <person name="Oliver K."/>
            <person name="Palmeiri A."/>
            <person name="Palmer S.A."/>
            <person name="Parker A."/>
            <person name="Patel D."/>
            <person name="Pearce A.V."/>
            <person name="Peck A.I."/>
            <person name="Pelan S."/>
            <person name="Phelps K."/>
            <person name="Phillimore B.J."/>
            <person name="Plumb R."/>
            <person name="Rajan J."/>
            <person name="Raymond C."/>
            <person name="Rouse G."/>
            <person name="Saenphimmachak C."/>
            <person name="Sehra H.K."/>
            <person name="Sheridan E."/>
            <person name="Shownkeen R."/>
            <person name="Sims S."/>
            <person name="Skuce C.D."/>
            <person name="Smith M."/>
            <person name="Steward C."/>
            <person name="Subramanian S."/>
            <person name="Sycamore N."/>
            <person name="Tracey A."/>
            <person name="Tromans A."/>
            <person name="Van Helmond Z."/>
            <person name="Wall M."/>
            <person name="Wallis J.M."/>
            <person name="White S."/>
            <person name="Whitehead S.L."/>
            <person name="Wilkinson J.E."/>
            <person name="Willey D.L."/>
            <person name="Williams H."/>
            <person name="Wilming L."/>
            <person name="Wray P.W."/>
            <person name="Wu Z."/>
            <person name="Coulson A."/>
            <person name="Vaudin M."/>
            <person name="Sulston J.E."/>
            <person name="Durbin R.M."/>
            <person name="Hubbard T."/>
            <person name="Wooster R."/>
            <person name="Dunham I."/>
            <person name="Carter N.P."/>
            <person name="McVean G."/>
            <person name="Ross M.T."/>
            <person name="Harrow J."/>
            <person name="Olson M.V."/>
            <person name="Beck S."/>
            <person name="Rogers J."/>
            <person name="Bentley D.R."/>
        </authorList>
    </citation>
    <scope>NUCLEOTIDE SEQUENCE [LARGE SCALE GENOMIC DNA]</scope>
</reference>
<feature type="chain" id="PRO_0000265936" description="Arylacetamide deacetylase-like 3">
    <location>
        <begin position="1"/>
        <end position="407"/>
    </location>
</feature>
<feature type="short sequence motif" description="Involved in the stabilization of the negatively charged intermediate by the formation of the oxyanion hole" evidence="1">
    <location>
        <begin position="119"/>
        <end position="121"/>
    </location>
</feature>
<feature type="active site" evidence="2">
    <location>
        <position position="193"/>
    </location>
</feature>
<feature type="active site" evidence="2">
    <location>
        <position position="347"/>
    </location>
</feature>
<feature type="active site" evidence="2">
    <location>
        <position position="377"/>
    </location>
</feature>
<feature type="sequence variant" id="VAR_060666" description="In dbSNP:rs3010877.">
    <original>P</original>
    <variation>S</variation>
    <location>
        <position position="104"/>
    </location>
</feature>
<feature type="sequence variant" id="VAR_060667" description="In dbSNP:rs3000859.">
    <original>L</original>
    <variation>M</variation>
    <location>
        <position position="128"/>
    </location>
</feature>
<feature type="sequence variant" id="VAR_060668" description="In dbSNP:rs17038445.">
    <original>R</original>
    <variation>W</variation>
    <location>
        <position position="186"/>
    </location>
</feature>
<feature type="sequence variant" id="VAR_060665" description="In dbSNP:rs7513079.">
    <original>F</original>
    <variation>C</variation>
    <location>
        <position position="252"/>
    </location>
</feature>
<feature type="sequence variant" id="VAR_060670" description="In dbSNP:rs3000931.">
    <original>M</original>
    <variation>I</variation>
    <location>
        <position position="307"/>
    </location>
</feature>
<feature type="sequence variant" id="VAR_060671" description="In dbSNP:rs11121969.">
    <original>P</original>
    <variation>L</variation>
    <location>
        <position position="337"/>
    </location>
</feature>
<protein>
    <recommendedName>
        <fullName>Arylacetamide deacetylase-like 3</fullName>
        <ecNumber>3.1.1.-</ecNumber>
    </recommendedName>
</protein>